<gene>
    <name evidence="4" type="primary">hutF</name>
    <name evidence="10" type="ordered locus">PA5106</name>
</gene>
<proteinExistence type="evidence at protein level"/>
<evidence type="ECO:0000269" key="1">
    <source>
    </source>
</evidence>
<evidence type="ECO:0000269" key="2">
    <source>
    </source>
</evidence>
<evidence type="ECO:0000269" key="3">
    <source>
    </source>
</evidence>
<evidence type="ECO:0000303" key="4">
    <source>
    </source>
</evidence>
<evidence type="ECO:0000303" key="5">
    <source>
    </source>
</evidence>
<evidence type="ECO:0000305" key="6"/>
<evidence type="ECO:0000305" key="7">
    <source>
    </source>
</evidence>
<evidence type="ECO:0000305" key="8">
    <source>
    </source>
</evidence>
<evidence type="ECO:0000305" key="9">
    <source>
    </source>
</evidence>
<evidence type="ECO:0000312" key="10">
    <source>
        <dbReference type="EMBL" id="AAG08491.1"/>
    </source>
</evidence>
<evidence type="ECO:0007744" key="11">
    <source>
        <dbReference type="PDB" id="3MDU"/>
    </source>
</evidence>
<evidence type="ECO:0007744" key="12">
    <source>
        <dbReference type="PDB" id="3MDW"/>
    </source>
</evidence>
<evidence type="ECO:0007744" key="13">
    <source>
        <dbReference type="PDB" id="4RDV"/>
    </source>
</evidence>
<evidence type="ECO:0007744" key="14">
    <source>
        <dbReference type="PDB" id="4RDW"/>
    </source>
</evidence>
<evidence type="ECO:0007744" key="15">
    <source>
        <dbReference type="PDB" id="4RZB"/>
    </source>
</evidence>
<evidence type="ECO:0007829" key="16">
    <source>
        <dbReference type="PDB" id="3MDU"/>
    </source>
</evidence>
<reference key="1">
    <citation type="journal article" date="2000" name="Nature">
        <title>Complete genome sequence of Pseudomonas aeruginosa PAO1, an opportunistic pathogen.</title>
        <authorList>
            <person name="Stover C.K."/>
            <person name="Pham X.-Q.T."/>
            <person name="Erwin A.L."/>
            <person name="Mizoguchi S.D."/>
            <person name="Warrener P."/>
            <person name="Hickey M.J."/>
            <person name="Brinkman F.S.L."/>
            <person name="Hufnagle W.O."/>
            <person name="Kowalik D.J."/>
            <person name="Lagrou M."/>
            <person name="Garber R.L."/>
            <person name="Goltry L."/>
            <person name="Tolentino E."/>
            <person name="Westbrock-Wadman S."/>
            <person name="Yuan Y."/>
            <person name="Brody L.L."/>
            <person name="Coulter S.N."/>
            <person name="Folger K.R."/>
            <person name="Kas A."/>
            <person name="Larbig K."/>
            <person name="Lim R.M."/>
            <person name="Smith K.A."/>
            <person name="Spencer D.H."/>
            <person name="Wong G.K.-S."/>
            <person name="Wu Z."/>
            <person name="Paulsen I.T."/>
            <person name="Reizer J."/>
            <person name="Saier M.H. Jr."/>
            <person name="Hancock R.E.W."/>
            <person name="Lory S."/>
            <person name="Olson M.V."/>
        </authorList>
    </citation>
    <scope>NUCLEOTIDE SEQUENCE [LARGE SCALE GENOMIC DNA]</scope>
    <source>
        <strain>ATCC 15692 / DSM 22644 / CIP 104116 / JCM 14847 / LMG 12228 / 1C / PRS 101 / PAO1</strain>
    </source>
</reference>
<reference key="2">
    <citation type="journal article" date="2006" name="Biochemistry">
        <title>Annotating enzymes of unknown function: N-formimino-L-glutamate deiminase is a member of the amidohydrolase superfamily.</title>
        <authorList>
            <person name="Marti-Arbona R."/>
            <person name="Xu C."/>
            <person name="Steele S."/>
            <person name="Weeks A."/>
            <person name="Kuty G.F."/>
            <person name="Seibert C.M."/>
            <person name="Raushel F.M."/>
        </authorList>
    </citation>
    <scope>PROTEIN SEQUENCE OF 1-6</scope>
    <scope>FUNCTION</scope>
    <scope>CATALYTIC ACTIVITY</scope>
    <scope>COFACTOR</scope>
    <scope>BIOPHYSICOCHEMICAL PROPERTIES</scope>
    <scope>PATHWAY</scope>
    <scope>SUBUNIT</scope>
</reference>
<reference key="3">
    <citation type="journal article" date="2006" name="Biochemistry">
        <title>Mechanistic characterization of N-formimino-L-glutamate iminohydrolase from Pseudomonas aeruginosa.</title>
        <authorList>
            <person name="Marti-Arbona R."/>
            <person name="Raushel F.M."/>
        </authorList>
    </citation>
    <scope>FUNCTION</scope>
    <scope>CATALYTIC ACTIVITY</scope>
    <scope>COFACTOR</scope>
    <scope>ACTIVITY REGULATION</scope>
    <scope>ACTIVE SITE</scope>
    <scope>MUTAGENESIS OF GLU-235; HIS-269 AND ASP-320</scope>
    <source>
        <strain>ATCC 15692 / DSM 22644 / CIP 104116 / JCM 14847 / LMG 12228 / 1C / PRS 101 / PAO1</strain>
    </source>
</reference>
<reference evidence="13" key="4">
    <citation type="submission" date="2014-09" db="PDB data bank">
        <title>The structure of N-formimino-L-glutamate iminohydrolase from Pseudomonas aeruginosa complexed with N-formimino-L-aspartate.</title>
        <authorList>
            <person name="Fedorov A.A."/>
            <person name="Fedorov E.V."/>
            <person name="Marti-Arbona R."/>
            <person name="Raushel F.M."/>
            <person name="Almo S.C."/>
        </authorList>
    </citation>
    <scope>X-RAY CRYSTALLOGRAPHY (2.08 ANGSTROMS) IN COMPLEX WITH N-FORMIMIDOYL-L-ASPARTATE AND ZINC</scope>
</reference>
<reference evidence="14" key="5">
    <citation type="submission" date="2014-09" db="PDB data bank">
        <title>The structure of N-formimino-L-glutamate iminohydrolase from Pseudomonas aeruginosa complexed with N-guanidino-L-glutaric acid.</title>
        <authorList>
            <person name="Fedorov A.A."/>
            <person name="Fedorov E.V."/>
            <person name="Marti-Arbona R."/>
            <person name="Raushel F.M."/>
            <person name="Almo S.C."/>
        </authorList>
    </citation>
    <scope>X-RAY CRYSTALLOGRAPHY (1.59 ANGSTROMS) IN COMPLEX WITH N-GUANIDINO-L-GLUTAMATE AND ZINC</scope>
</reference>
<reference evidence="11 12 15" key="6">
    <citation type="journal article" date="2015" name="Biochemistry">
        <title>Structure of N-formimino-L-glutamate iminohydrolase from Pseudomonas aeruginosa.</title>
        <authorList>
            <person name="Fedorov A.A."/>
            <person name="Marti-Arbona R."/>
            <person name="Nemmara V.V."/>
            <person name="Hitchcock D."/>
            <person name="Fedorov E.V."/>
            <person name="Almo S.C."/>
            <person name="Raushel F.M."/>
        </authorList>
    </citation>
    <scope>X-RAY CRYSTALLOGRAPHY (1.40 ANGSTROMS) IN COMPLEXES WITH ZINC AND INHIBITORS N-FORMIMINO-L-ASPARTATE AND N-GUANIDINO-L-GLUTARIC ACID</scope>
    <scope>COFACTOR</scope>
    <scope>ACTIVITY REGULATION</scope>
    <scope>SUBUNIT</scope>
    <scope>ACTIVE SITE</scope>
    <source>
        <strain>ATCC 15692 / DSM 22644 / CIP 104116 / JCM 14847 / LMG 12228 / 1C / PRS 101 / PAO1</strain>
    </source>
</reference>
<accession>Q9HU77</accession>
<protein>
    <recommendedName>
        <fullName evidence="6">Formimidoylglutamate deiminase</fullName>
        <ecNumber evidence="1 2">3.5.3.13</ecNumber>
    </recommendedName>
    <alternativeName>
        <fullName evidence="6">Formiminoglutamate deiminase</fullName>
    </alternativeName>
    <alternativeName>
        <fullName evidence="4">N-formimino-L-glutamate deiminase</fullName>
    </alternativeName>
    <alternativeName>
        <fullName evidence="5">N-formimino-L-glutamate iminohydrolase</fullName>
    </alternativeName>
</protein>
<dbReference type="EC" id="3.5.3.13" evidence="1 2"/>
<dbReference type="EMBL" id="AE004091">
    <property type="protein sequence ID" value="AAG08491.1"/>
    <property type="molecule type" value="Genomic_DNA"/>
</dbReference>
<dbReference type="PIR" id="C83008">
    <property type="entry name" value="C83008"/>
</dbReference>
<dbReference type="RefSeq" id="NP_253793.1">
    <property type="nucleotide sequence ID" value="NC_002516.2"/>
</dbReference>
<dbReference type="RefSeq" id="WP_003114467.1">
    <property type="nucleotide sequence ID" value="NZ_QZGE01000002.1"/>
</dbReference>
<dbReference type="PDB" id="3MDU">
    <property type="method" value="X-ray"/>
    <property type="resolution" value="1.40 A"/>
    <property type="chains" value="A=1-453"/>
</dbReference>
<dbReference type="PDB" id="3MDW">
    <property type="method" value="X-ray"/>
    <property type="resolution" value="1.90 A"/>
    <property type="chains" value="A/B/C/D=1-453"/>
</dbReference>
<dbReference type="PDB" id="4RDV">
    <property type="method" value="X-ray"/>
    <property type="resolution" value="2.08 A"/>
    <property type="chains" value="A/B/C/D=1-453"/>
</dbReference>
<dbReference type="PDB" id="4RDW">
    <property type="method" value="X-ray"/>
    <property type="resolution" value="1.59 A"/>
    <property type="chains" value="A=1-453"/>
</dbReference>
<dbReference type="PDB" id="4RZB">
    <property type="method" value="X-ray"/>
    <property type="resolution" value="1.86 A"/>
    <property type="chains" value="A/B=1-453"/>
</dbReference>
<dbReference type="PDBsum" id="3MDU"/>
<dbReference type="PDBsum" id="3MDW"/>
<dbReference type="PDBsum" id="4RDV"/>
<dbReference type="PDBsum" id="4RDW"/>
<dbReference type="PDBsum" id="4RZB"/>
<dbReference type="SMR" id="Q9HU77"/>
<dbReference type="STRING" id="208964.PA5106"/>
<dbReference type="PaxDb" id="208964-PA5106"/>
<dbReference type="GeneID" id="880703"/>
<dbReference type="KEGG" id="pae:PA5106"/>
<dbReference type="PATRIC" id="fig|208964.12.peg.5351"/>
<dbReference type="PseudoCAP" id="PA5106"/>
<dbReference type="HOGENOM" id="CLU_012358_3_0_6"/>
<dbReference type="InParanoid" id="Q9HU77"/>
<dbReference type="OrthoDB" id="9796020at2"/>
<dbReference type="PhylomeDB" id="Q9HU77"/>
<dbReference type="BioCyc" id="PAER208964:G1FZ6-5221-MONOMER"/>
<dbReference type="BRENDA" id="3.5.3.13">
    <property type="organism ID" value="5087"/>
</dbReference>
<dbReference type="BRENDA" id="3.5.3.8">
    <property type="organism ID" value="5087"/>
</dbReference>
<dbReference type="SABIO-RK" id="Q9HU77"/>
<dbReference type="UniPathway" id="UPA00379">
    <property type="reaction ID" value="UER00553"/>
</dbReference>
<dbReference type="EvolutionaryTrace" id="Q9HU77"/>
<dbReference type="Proteomes" id="UP000002438">
    <property type="component" value="Chromosome"/>
</dbReference>
<dbReference type="GO" id="GO:0005829">
    <property type="term" value="C:cytosol"/>
    <property type="evidence" value="ECO:0000318"/>
    <property type="project" value="GO_Central"/>
</dbReference>
<dbReference type="GO" id="GO:0019239">
    <property type="term" value="F:deaminase activity"/>
    <property type="evidence" value="ECO:0000318"/>
    <property type="project" value="GO_Central"/>
</dbReference>
<dbReference type="GO" id="GO:0050416">
    <property type="term" value="F:formimidoylglutamate deiminase activity"/>
    <property type="evidence" value="ECO:0000314"/>
    <property type="project" value="PseudoCAP"/>
</dbReference>
<dbReference type="GO" id="GO:0046872">
    <property type="term" value="F:metal ion binding"/>
    <property type="evidence" value="ECO:0007669"/>
    <property type="project" value="UniProtKB-KW"/>
</dbReference>
<dbReference type="GO" id="GO:0006548">
    <property type="term" value="P:L-histidine catabolic process"/>
    <property type="evidence" value="ECO:0000315"/>
    <property type="project" value="PseudoCAP"/>
</dbReference>
<dbReference type="GO" id="GO:0019556">
    <property type="term" value="P:L-histidine catabolic process to glutamate and formamide"/>
    <property type="evidence" value="ECO:0007669"/>
    <property type="project" value="UniProtKB-UniPathway"/>
</dbReference>
<dbReference type="GO" id="GO:0019557">
    <property type="term" value="P:L-histidine catabolic process to glutamate and formate"/>
    <property type="evidence" value="ECO:0007669"/>
    <property type="project" value="UniProtKB-UniPathway"/>
</dbReference>
<dbReference type="CDD" id="cd01313">
    <property type="entry name" value="Met_dep_hydrolase_E"/>
    <property type="match status" value="1"/>
</dbReference>
<dbReference type="Gene3D" id="3.20.20.140">
    <property type="entry name" value="Metal-dependent hydrolases"/>
    <property type="match status" value="1"/>
</dbReference>
<dbReference type="Gene3D" id="2.30.40.10">
    <property type="entry name" value="Urease, subunit C, domain 1"/>
    <property type="match status" value="1"/>
</dbReference>
<dbReference type="InterPro" id="IPR006680">
    <property type="entry name" value="Amidohydro-rel"/>
</dbReference>
<dbReference type="InterPro" id="IPR010252">
    <property type="entry name" value="HutF"/>
</dbReference>
<dbReference type="InterPro" id="IPR055156">
    <property type="entry name" value="HutF-like_N"/>
</dbReference>
<dbReference type="InterPro" id="IPR011059">
    <property type="entry name" value="Metal-dep_hydrolase_composite"/>
</dbReference>
<dbReference type="InterPro" id="IPR032466">
    <property type="entry name" value="Metal_Hydrolase"/>
</dbReference>
<dbReference type="InterPro" id="IPR051607">
    <property type="entry name" value="Metallo-dep_hydrolases"/>
</dbReference>
<dbReference type="NCBIfam" id="TIGR02022">
    <property type="entry name" value="hutF"/>
    <property type="match status" value="1"/>
</dbReference>
<dbReference type="NCBIfam" id="NF006681">
    <property type="entry name" value="PRK09229.1-2"/>
    <property type="match status" value="1"/>
</dbReference>
<dbReference type="NCBIfam" id="NF006682">
    <property type="entry name" value="PRK09229.1-3"/>
    <property type="match status" value="1"/>
</dbReference>
<dbReference type="NCBIfam" id="NF006684">
    <property type="entry name" value="PRK09229.1-5"/>
    <property type="match status" value="1"/>
</dbReference>
<dbReference type="PANTHER" id="PTHR11271:SF48">
    <property type="entry name" value="AMIDOHYDROLASE-RELATED DOMAIN-CONTAINING PROTEIN"/>
    <property type="match status" value="1"/>
</dbReference>
<dbReference type="PANTHER" id="PTHR11271">
    <property type="entry name" value="GUANINE DEAMINASE"/>
    <property type="match status" value="1"/>
</dbReference>
<dbReference type="Pfam" id="PF01979">
    <property type="entry name" value="Amidohydro_1"/>
    <property type="match status" value="1"/>
</dbReference>
<dbReference type="Pfam" id="PF22429">
    <property type="entry name" value="HutF_N"/>
    <property type="match status" value="1"/>
</dbReference>
<dbReference type="SUPFAM" id="SSF51338">
    <property type="entry name" value="Composite domain of metallo-dependent hydrolases"/>
    <property type="match status" value="1"/>
</dbReference>
<dbReference type="SUPFAM" id="SSF51556">
    <property type="entry name" value="Metallo-dependent hydrolases"/>
    <property type="match status" value="1"/>
</dbReference>
<name>HUTF_PSEAE</name>
<keyword id="KW-0002">3D-structure</keyword>
<keyword id="KW-0903">Direct protein sequencing</keyword>
<keyword id="KW-0369">Histidine metabolism</keyword>
<keyword id="KW-0378">Hydrolase</keyword>
<keyword id="KW-0479">Metal-binding</keyword>
<keyword id="KW-1185">Reference proteome</keyword>
<keyword id="KW-0862">Zinc</keyword>
<comment type="function">
    <text evidence="1 2">Catalyzes the hydrolysis of N-formimino-L-glutamate to N-formyl-L-glutamate and ammonia.</text>
</comment>
<comment type="catalytic activity">
    <reaction evidence="1 2">
        <text>N-formimidoyl-L-glutamate + H2O = N-formyl-L-glutamate + NH4(+)</text>
        <dbReference type="Rhea" id="RHEA:22832"/>
        <dbReference type="ChEBI" id="CHEBI:15377"/>
        <dbReference type="ChEBI" id="CHEBI:17684"/>
        <dbReference type="ChEBI" id="CHEBI:28938"/>
        <dbReference type="ChEBI" id="CHEBI:58928"/>
        <dbReference type="EC" id="3.5.3.13"/>
    </reaction>
    <physiologicalReaction direction="left-to-right" evidence="1">
        <dbReference type="Rhea" id="RHEA:22833"/>
    </physiologicalReaction>
</comment>
<comment type="cofactor">
    <cofactor evidence="1 2 3">
        <name>Zn(2+)</name>
        <dbReference type="ChEBI" id="CHEBI:29105"/>
    </cofactor>
    <text evidence="1 2 3">Binds 1 zinc ion per subunit (PubMed:25559274). Can also use Cd(2+), Ni(2+) or Cu(2+) (PubMed:16475788, PubMed:17128965).</text>
</comment>
<comment type="activity regulation">
    <text evidence="2 3">Inhibited by the metal chelator dipicolinate (PubMed:17128965). Inhibited by N-formimino-L-aspartate and N-guanidino-L-glutaric acid (PubMed:25559274).</text>
</comment>
<comment type="biophysicochemical properties">
    <kinetics>
        <KM evidence="1">0.22 mM for N-formimidoyl-L-glutamate (in the presence of Zn(2+))</KM>
        <KM evidence="1">2.7 mM for N-formimidoyl-L-glutamate (in the presence of Ni(2+))</KM>
        <KM evidence="1">2.1 mM for N-formimidoyl-L-glutamate (in the presence of Cd(2+))</KM>
        <KM evidence="1">1.2 mM for N-formimidoyl-L-glutamate (in the presence of Cu(2+))</KM>
        <text evidence="1">kcat is 13.2 sec(-1) with N-formimidoyl-L-glutamate as substrate (in the presence of Zn(2+)). kcat is 21.3 sec(-1) with N-formimidoyl-L-glutamate as substrate (in the presence of Ni(2+)). kcat is 31.0 sec(-1) with N-formimidoyl-L-glutamate as substrate (in the presence of Cd(2+)). kcat is 8.5 sec(-1) with N-formimidoyl-L-glutamate as substrate (in the presence of Cu(2+)).</text>
    </kinetics>
</comment>
<comment type="pathway">
    <text evidence="1">Amino-acid degradation; L-histidine degradation into L-glutamate; L-glutamate from N-formimidoyl-L-glutamate (deiminase route): step 1/2.</text>
</comment>
<comment type="subunit">
    <text evidence="1 3">Homodimer.</text>
</comment>
<comment type="miscellaneous">
    <text evidence="7">There appear to be two competing pathways for the degradation of N-formimino-L-glutamate in P.aeruginosa: the two-step degradation of N-formimino-L-glutamate to ammonia, formate, and L-glutamate (via HutF and HutG), and the direct hydrolysis of the formimino functional group of N-formimino-L-glutamate to produce formamide and L-glutamate (via PA3175).</text>
</comment>
<comment type="similarity">
    <text evidence="6">Belongs to the metallo-dependent hydrolases superfamily.</text>
</comment>
<organism>
    <name type="scientific">Pseudomonas aeruginosa (strain ATCC 15692 / DSM 22644 / CIP 104116 / JCM 14847 / LMG 12228 / 1C / PRS 101 / PAO1)</name>
    <dbReference type="NCBI Taxonomy" id="208964"/>
    <lineage>
        <taxon>Bacteria</taxon>
        <taxon>Pseudomonadati</taxon>
        <taxon>Pseudomonadota</taxon>
        <taxon>Gammaproteobacteria</taxon>
        <taxon>Pseudomonadales</taxon>
        <taxon>Pseudomonadaceae</taxon>
        <taxon>Pseudomonas</taxon>
    </lineage>
</organism>
<sequence>MSAIFAERALLPEGWARNVRFEISADGVLAEIRPDANADGAERLGGAVLPGMPNLHSHAFQRAMAGLAEVAGNPNDSFWTWRELMYRMVARLSPEQIEVIACQLYIEMLKAGYTAVAEFHYVHHDLDGRSYADPAELSLRISRAASAAGIGLTLLPVLYSHAGFGGQPASEGQRRFINGSEAYLELLQRLRAPLEAAGHSLGLCFHSLRAVTPQQIATVLAAGHDDLPVHIHIAEQQKEVDDCQAWSGRRPLQWLYENVAVDQRWCLVHATHADPAEVAAMARSGAVAGLCLSTEANLGDGIFPATDFLAQGGRLGIGSDSHVSLSVVEELRWLEYGQRLRDRKRNRLYRDDQPMIGRTLYDAALAGGAQALGQPIGSLAVGRRADLLVLDGNDPYLASAEGDALLNRWLFAGGDRQVRDVMVAGRWVVRDGRHAGEERSARAFVQVLGELLD</sequence>
<feature type="chain" id="PRO_0000456686" description="Formimidoylglutamate deiminase">
    <location>
        <begin position="1"/>
        <end position="453"/>
    </location>
</feature>
<feature type="active site" description="Proton acceptor" evidence="8 9">
    <location>
        <position position="269"/>
    </location>
</feature>
<feature type="active site" description="Proton acceptor" evidence="8 9">
    <location>
        <position position="320"/>
    </location>
</feature>
<feature type="binding site" evidence="3 11 12 13 14 15">
    <location>
        <position position="56"/>
    </location>
    <ligand>
        <name>Zn(2+)</name>
        <dbReference type="ChEBI" id="CHEBI:29105"/>
    </ligand>
</feature>
<feature type="binding site" evidence="3 11 12 13 14 15">
    <location>
        <position position="58"/>
    </location>
    <ligand>
        <name>Zn(2+)</name>
        <dbReference type="ChEBI" id="CHEBI:29105"/>
    </ligand>
</feature>
<feature type="binding site" evidence="9 11 12 13 14 15">
    <location>
        <position position="61"/>
    </location>
    <ligand>
        <name>N-formimidoyl-L-glutamate</name>
        <dbReference type="ChEBI" id="CHEBI:58928"/>
    </ligand>
</feature>
<feature type="binding site" evidence="9 11 12 13 14 15">
    <location>
        <position position="82"/>
    </location>
    <ligand>
        <name>N-formimidoyl-L-glutamate</name>
        <dbReference type="ChEBI" id="CHEBI:58928"/>
    </ligand>
</feature>
<feature type="binding site" evidence="9 11 12 13 14 15">
    <location>
        <position position="121"/>
    </location>
    <ligand>
        <name>N-formimidoyl-L-glutamate</name>
        <dbReference type="ChEBI" id="CHEBI:58928"/>
    </ligand>
</feature>
<feature type="binding site" evidence="9 11 12 13 14 15">
    <location>
        <position position="206"/>
    </location>
    <ligand>
        <name>N-formimidoyl-L-glutamate</name>
        <dbReference type="ChEBI" id="CHEBI:58928"/>
    </ligand>
</feature>
<feature type="binding site" evidence="9 11 12 13 14 15">
    <location>
        <position position="209"/>
    </location>
    <ligand>
        <name>N-formimidoyl-L-glutamate</name>
        <dbReference type="ChEBI" id="CHEBI:58928"/>
    </ligand>
</feature>
<feature type="binding site" evidence="3 11 12 13 14 15">
    <location>
        <position position="232"/>
    </location>
    <ligand>
        <name>Zn(2+)</name>
        <dbReference type="ChEBI" id="CHEBI:29105"/>
    </ligand>
</feature>
<feature type="binding site" evidence="9 11 12 13 14 15">
    <location>
        <position position="235"/>
    </location>
    <ligand>
        <name>N-formimidoyl-L-glutamate</name>
        <dbReference type="ChEBI" id="CHEBI:58928"/>
    </ligand>
</feature>
<feature type="binding site" evidence="3 11 12 13 14 15">
    <location>
        <position position="320"/>
    </location>
    <ligand>
        <name>Zn(2+)</name>
        <dbReference type="ChEBI" id="CHEBI:29105"/>
    </ligand>
</feature>
<feature type="mutagenesis site" description="Reduces catalytic activity by 3 orders of magnitude." evidence="2">
    <original>E</original>
    <variation>A</variation>
    <location>
        <position position="235"/>
    </location>
</feature>
<feature type="mutagenesis site" description="Reduces catalytic activity by 4 orders of magnitude." evidence="2">
    <original>E</original>
    <variation>D</variation>
    <variation>Q</variation>
    <location>
        <position position="235"/>
    </location>
</feature>
<feature type="mutagenesis site" description="Reduces catalytic activity by 5 orders of magnitude. Significant decrease in metal content." evidence="2">
    <original>H</original>
    <variation>A</variation>
    <variation>N</variation>
    <location>
        <position position="269"/>
    </location>
</feature>
<feature type="mutagenesis site" description="Reduces catalytic activity by 5 orders of magnitude. Slight decrease in metal content." evidence="2">
    <original>H</original>
    <variation>C</variation>
    <location>
        <position position="269"/>
    </location>
</feature>
<feature type="mutagenesis site" description="Reduces catalytic activity by over 6 orders of magnitude. Still able to bind a significant amount of zinc." evidence="2">
    <original>D</original>
    <variation>A</variation>
    <variation>C</variation>
    <location>
        <position position="320"/>
    </location>
</feature>
<feature type="strand" evidence="16">
    <location>
        <begin position="3"/>
        <end position="11"/>
    </location>
</feature>
<feature type="strand" evidence="16">
    <location>
        <begin position="14"/>
        <end position="23"/>
    </location>
</feature>
<feature type="strand" evidence="16">
    <location>
        <begin position="27"/>
        <end position="35"/>
    </location>
</feature>
<feature type="strand" evidence="16">
    <location>
        <begin position="41"/>
        <end position="43"/>
    </location>
</feature>
<feature type="strand" evidence="16">
    <location>
        <begin position="48"/>
        <end position="50"/>
    </location>
</feature>
<feature type="strand" evidence="16">
    <location>
        <begin position="52"/>
        <end position="57"/>
    </location>
</feature>
<feature type="helix" evidence="16">
    <location>
        <begin position="59"/>
        <end position="64"/>
    </location>
</feature>
<feature type="turn" evidence="16">
    <location>
        <begin position="65"/>
        <end position="68"/>
    </location>
</feature>
<feature type="helix" evidence="16">
    <location>
        <begin position="78"/>
        <end position="89"/>
    </location>
</feature>
<feature type="helix" evidence="16">
    <location>
        <begin position="94"/>
        <end position="110"/>
    </location>
</feature>
<feature type="strand" evidence="16">
    <location>
        <begin position="113"/>
        <end position="120"/>
    </location>
</feature>
<feature type="helix" evidence="16">
    <location>
        <begin position="136"/>
        <end position="148"/>
    </location>
</feature>
<feature type="strand" evidence="16">
    <location>
        <begin position="151"/>
        <end position="156"/>
    </location>
</feature>
<feature type="strand" evidence="16">
    <location>
        <begin position="161"/>
        <end position="163"/>
    </location>
</feature>
<feature type="turn" evidence="16">
    <location>
        <begin position="164"/>
        <end position="166"/>
    </location>
</feature>
<feature type="helix" evidence="16">
    <location>
        <begin position="171"/>
        <end position="176"/>
    </location>
</feature>
<feature type="helix" evidence="16">
    <location>
        <begin position="180"/>
        <end position="196"/>
    </location>
</feature>
<feature type="strand" evidence="16">
    <location>
        <begin position="203"/>
        <end position="207"/>
    </location>
</feature>
<feature type="turn" evidence="16">
    <location>
        <begin position="208"/>
        <end position="210"/>
    </location>
</feature>
<feature type="helix" evidence="16">
    <location>
        <begin position="213"/>
        <end position="220"/>
    </location>
</feature>
<feature type="strand" evidence="16">
    <location>
        <begin position="229"/>
        <end position="234"/>
    </location>
</feature>
<feature type="helix" evidence="16">
    <location>
        <begin position="237"/>
        <end position="247"/>
    </location>
</feature>
<feature type="helix" evidence="16">
    <location>
        <begin position="251"/>
        <end position="258"/>
    </location>
</feature>
<feature type="strand" evidence="16">
    <location>
        <begin position="265"/>
        <end position="269"/>
    </location>
</feature>
<feature type="helix" evidence="16">
    <location>
        <begin position="275"/>
        <end position="284"/>
    </location>
</feature>
<feature type="strand" evidence="16">
    <location>
        <begin position="287"/>
        <end position="290"/>
    </location>
</feature>
<feature type="helix" evidence="16">
    <location>
        <begin position="292"/>
        <end position="297"/>
    </location>
</feature>
<feature type="helix" evidence="16">
    <location>
        <begin position="305"/>
        <end position="310"/>
    </location>
</feature>
<feature type="strand" evidence="16">
    <location>
        <begin position="314"/>
        <end position="317"/>
    </location>
</feature>
<feature type="helix" evidence="16">
    <location>
        <begin position="327"/>
        <end position="342"/>
    </location>
</feature>
<feature type="helix" evidence="16">
    <location>
        <begin position="356"/>
        <end position="372"/>
    </location>
</feature>
<feature type="strand" evidence="16">
    <location>
        <begin position="387"/>
        <end position="390"/>
    </location>
</feature>
<feature type="helix" evidence="16">
    <location>
        <begin position="395"/>
        <end position="398"/>
    </location>
</feature>
<feature type="helix" evidence="16">
    <location>
        <begin position="402"/>
        <end position="412"/>
    </location>
</feature>
<feature type="helix" evidence="16">
    <location>
        <begin position="415"/>
        <end position="417"/>
    </location>
</feature>
<feature type="strand" evidence="16">
    <location>
        <begin position="418"/>
        <end position="423"/>
    </location>
</feature>
<feature type="strand" evidence="16">
    <location>
        <begin position="426"/>
        <end position="430"/>
    </location>
</feature>
<feature type="helix" evidence="16">
    <location>
        <begin position="437"/>
        <end position="450"/>
    </location>
</feature>